<accession>Q7T1R4</accession>
<accession>Q5I088</accession>
<keyword id="KW-0010">Activator</keyword>
<keyword id="KW-0217">Developmental protein</keyword>
<keyword id="KW-0238">DNA-binding</keyword>
<keyword id="KW-0539">Nucleus</keyword>
<keyword id="KW-1185">Reference proteome</keyword>
<keyword id="KW-0804">Transcription</keyword>
<keyword id="KW-0805">Transcription regulation</keyword>
<reference evidence="7" key="1">
    <citation type="journal article" date="2003" name="Dev. Dyn.">
        <title>Molecular components of the endoderm specification pathway in Xenopus tropicalis.</title>
        <authorList>
            <person name="D'Souza A."/>
            <person name="Lee M."/>
            <person name="Taverner N."/>
            <person name="Mason J."/>
            <person name="Carruthers S."/>
            <person name="Smith J.C."/>
            <person name="Amaya E."/>
            <person name="Papalopulu N."/>
            <person name="Zorn A.M."/>
        </authorList>
    </citation>
    <scope>NUCLEOTIDE SEQUENCE [MRNA]</scope>
    <source>
        <tissue evidence="7">Neurula</tissue>
    </source>
</reference>
<reference evidence="5 8" key="2">
    <citation type="submission" date="2006-06" db="EMBL/GenBank/DDBJ databases">
        <authorList>
            <consortium name="Sanger Xenopus tropicalis EST/cDNA project"/>
        </authorList>
    </citation>
    <scope>NUCLEOTIDE SEQUENCE [LARGE SCALE MRNA]</scope>
    <source>
        <tissue evidence="8">Neurula</tissue>
    </source>
</reference>
<reference evidence="5 8" key="3">
    <citation type="submission" date="2004-12" db="EMBL/GenBank/DDBJ databases">
        <authorList>
            <consortium name="NIH - Xenopus Gene Collection (XGC) project"/>
        </authorList>
    </citation>
    <scope>NUCLEOTIDE SEQUENCE [LARGE SCALE MRNA] OF 6-434</scope>
    <source>
        <tissue evidence="6">Embryo</tissue>
    </source>
</reference>
<dbReference type="EMBL" id="AY260736">
    <property type="protein sequence ID" value="AAP82293.1"/>
    <property type="molecule type" value="mRNA"/>
</dbReference>
<dbReference type="EMBL" id="CR848398">
    <property type="protein sequence ID" value="CAJ82886.1"/>
    <property type="molecule type" value="mRNA"/>
</dbReference>
<dbReference type="EMBL" id="BC088590">
    <property type="protein sequence ID" value="AAH88590.1"/>
    <property type="molecule type" value="mRNA"/>
</dbReference>
<dbReference type="RefSeq" id="NP_989423.1">
    <property type="nucleotide sequence ID" value="NM_204092.1"/>
</dbReference>
<dbReference type="SMR" id="Q7T1R4"/>
<dbReference type="FunCoup" id="Q7T1R4">
    <property type="interactions" value="2438"/>
</dbReference>
<dbReference type="STRING" id="8364.ENSXETP00000013505"/>
<dbReference type="PaxDb" id="8364-ENSXETP00000056642"/>
<dbReference type="GeneID" id="395063"/>
<dbReference type="KEGG" id="xtr:395063"/>
<dbReference type="AGR" id="Xenbase:XB-GENE-480476"/>
<dbReference type="CTD" id="3170"/>
<dbReference type="Xenbase" id="XB-GENE-480476">
    <property type="gene designation" value="foxa2"/>
</dbReference>
<dbReference type="eggNOG" id="KOG3563">
    <property type="taxonomic scope" value="Eukaryota"/>
</dbReference>
<dbReference type="InParanoid" id="Q7T1R4"/>
<dbReference type="OMA" id="EGHEHTE"/>
<dbReference type="OrthoDB" id="5954824at2759"/>
<dbReference type="PhylomeDB" id="Q7T1R4"/>
<dbReference type="TreeFam" id="TF316127"/>
<dbReference type="Proteomes" id="UP000008143">
    <property type="component" value="Chromosome 5"/>
</dbReference>
<dbReference type="Bgee" id="ENSXETG00000026998">
    <property type="expression patterns" value="Expressed in neurula embryo and 11 other cell types or tissues"/>
</dbReference>
<dbReference type="GO" id="GO:0005634">
    <property type="term" value="C:nucleus"/>
    <property type="evidence" value="ECO:0000250"/>
    <property type="project" value="UniProtKB"/>
</dbReference>
<dbReference type="GO" id="GO:0003700">
    <property type="term" value="F:DNA-binding transcription factor activity"/>
    <property type="evidence" value="ECO:0007669"/>
    <property type="project" value="InterPro"/>
</dbReference>
<dbReference type="GO" id="GO:0019904">
    <property type="term" value="F:protein domain specific binding"/>
    <property type="evidence" value="ECO:0007669"/>
    <property type="project" value="InterPro"/>
</dbReference>
<dbReference type="GO" id="GO:0043565">
    <property type="term" value="F:sequence-specific DNA binding"/>
    <property type="evidence" value="ECO:0000250"/>
    <property type="project" value="UniProtKB"/>
</dbReference>
<dbReference type="GO" id="GO:0001707">
    <property type="term" value="P:mesoderm formation"/>
    <property type="evidence" value="ECO:0000250"/>
    <property type="project" value="UniProtKB"/>
</dbReference>
<dbReference type="GO" id="GO:0045893">
    <property type="term" value="P:positive regulation of DNA-templated transcription"/>
    <property type="evidence" value="ECO:0000250"/>
    <property type="project" value="UniProtKB"/>
</dbReference>
<dbReference type="CDD" id="cd20039">
    <property type="entry name" value="FH_FOXA2"/>
    <property type="match status" value="1"/>
</dbReference>
<dbReference type="FunFam" id="1.10.10.10:FF:000042">
    <property type="entry name" value="hepatocyte nuclear factor 3-beta"/>
    <property type="match status" value="1"/>
</dbReference>
<dbReference type="Gene3D" id="1.10.10.10">
    <property type="entry name" value="Winged helix-like DNA-binding domain superfamily/Winged helix DNA-binding domain"/>
    <property type="match status" value="1"/>
</dbReference>
<dbReference type="InterPro" id="IPR013638">
    <property type="entry name" value="Fork-head_N"/>
</dbReference>
<dbReference type="InterPro" id="IPR001766">
    <property type="entry name" value="Fork_head_dom"/>
</dbReference>
<dbReference type="InterPro" id="IPR018533">
    <property type="entry name" value="Forkhead_box_C"/>
</dbReference>
<dbReference type="InterPro" id="IPR050211">
    <property type="entry name" value="FOX_domain-containing"/>
</dbReference>
<dbReference type="InterPro" id="IPR018122">
    <property type="entry name" value="TF_fork_head_CS_1"/>
</dbReference>
<dbReference type="InterPro" id="IPR030456">
    <property type="entry name" value="TF_fork_head_CS_2"/>
</dbReference>
<dbReference type="InterPro" id="IPR036388">
    <property type="entry name" value="WH-like_DNA-bd_sf"/>
</dbReference>
<dbReference type="InterPro" id="IPR036390">
    <property type="entry name" value="WH_DNA-bd_sf"/>
</dbReference>
<dbReference type="PANTHER" id="PTHR11829">
    <property type="entry name" value="FORKHEAD BOX PROTEIN"/>
    <property type="match status" value="1"/>
</dbReference>
<dbReference type="PANTHER" id="PTHR11829:SF167">
    <property type="entry name" value="HEPATOCYTE NUCLEAR FACTOR 3-BETA"/>
    <property type="match status" value="1"/>
</dbReference>
<dbReference type="Pfam" id="PF00250">
    <property type="entry name" value="Forkhead"/>
    <property type="match status" value="1"/>
</dbReference>
<dbReference type="Pfam" id="PF08430">
    <property type="entry name" value="Forkhead_N"/>
    <property type="match status" value="1"/>
</dbReference>
<dbReference type="Pfam" id="PF09354">
    <property type="entry name" value="HNF_C"/>
    <property type="match status" value="1"/>
</dbReference>
<dbReference type="PRINTS" id="PR00053">
    <property type="entry name" value="FORKHEAD"/>
</dbReference>
<dbReference type="SMART" id="SM00339">
    <property type="entry name" value="FH"/>
    <property type="match status" value="1"/>
</dbReference>
<dbReference type="SUPFAM" id="SSF46785">
    <property type="entry name" value="Winged helix' DNA-binding domain"/>
    <property type="match status" value="1"/>
</dbReference>
<dbReference type="PROSITE" id="PS00657">
    <property type="entry name" value="FORK_HEAD_1"/>
    <property type="match status" value="1"/>
</dbReference>
<dbReference type="PROSITE" id="PS00658">
    <property type="entry name" value="FORK_HEAD_2"/>
    <property type="match status" value="1"/>
</dbReference>
<dbReference type="PROSITE" id="PS50039">
    <property type="entry name" value="FORK_HEAD_3"/>
    <property type="match status" value="1"/>
</dbReference>
<protein>
    <recommendedName>
        <fullName>Forkhead box protein A2</fullName>
        <shortName>FoxA2</shortName>
    </recommendedName>
</protein>
<organism>
    <name type="scientific">Xenopus tropicalis</name>
    <name type="common">Western clawed frog</name>
    <name type="synonym">Silurana tropicalis</name>
    <dbReference type="NCBI Taxonomy" id="8364"/>
    <lineage>
        <taxon>Eukaryota</taxon>
        <taxon>Metazoa</taxon>
        <taxon>Chordata</taxon>
        <taxon>Craniata</taxon>
        <taxon>Vertebrata</taxon>
        <taxon>Euteleostomi</taxon>
        <taxon>Amphibia</taxon>
        <taxon>Batrachia</taxon>
        <taxon>Anura</taxon>
        <taxon>Pipoidea</taxon>
        <taxon>Pipidae</taxon>
        <taxon>Xenopodinae</taxon>
        <taxon>Xenopus</taxon>
        <taxon>Silurana</taxon>
    </lineage>
</organism>
<proteinExistence type="evidence at transcript level"/>
<name>FOXA2_XENTR</name>
<comment type="function">
    <text evidence="1">Acts as a transcriptional activator during early development, limiting the extent of mesoderm formation in the gastrula. Binds to DNA via the target sequence 5'-GT[AC]AACA-3', with 5'-GTAAACA-3' being the preferred binding site (By similarity).</text>
</comment>
<comment type="subcellular location">
    <subcellularLocation>
        <location evidence="2 5">Nucleus</location>
    </subcellularLocation>
</comment>
<gene>
    <name evidence="8" type="primary">foxa2</name>
    <name type="ORF">TNeu069i04.1</name>
</gene>
<sequence length="434" mass="47865">MLGAVKMEGHEATDWSSYYGEPEAYSSVGNMNAGLSMNPMNTYMSMSAMSTSANMTAGSMNMSYVNTGMSPSLTGMSPGTGAMTGMGTGVASMASHLSPSMSPMSAQATSMNALAPYTNMNSMSPIYGQSNINRSRDPKTYRRSYTHAKPPYSYISLITMAIQQSPNKMLTLSEIYQWIMDLFPFYRQNQQRWQNSIRHSLSFNDCFLKVPRSPDKPGKGSFWTLHPDSGNMFENGCYLRRQKRFKCEKKPSLREGGGKKLSEGSSSVGSAANSSSESSVGNESPHSSSSPCQEQKRSLVDMKSSQGLSPDHAASPASQAQHLLSQHHSVLSHEAQSHLKPEHHYSFNHPFSINNLMSSEQQHHHHHHHNHHHHHKMDLKAYEQVMHYSGYGSPMTGSLAMSTVTNKSGLESSPISSDTSYYQGVYSRPIMNSS</sequence>
<feature type="chain" id="PRO_0000248858" description="Forkhead box protein A2">
    <location>
        <begin position="1"/>
        <end position="434"/>
    </location>
</feature>
<feature type="DNA-binding region" description="Fork-head" evidence="3">
    <location>
        <begin position="149"/>
        <end position="243"/>
    </location>
</feature>
<feature type="region of interest" description="Disordered" evidence="4">
    <location>
        <begin position="249"/>
        <end position="339"/>
    </location>
</feature>
<feature type="compositionally biased region" description="Basic and acidic residues" evidence="4">
    <location>
        <begin position="249"/>
        <end position="262"/>
    </location>
</feature>
<feature type="compositionally biased region" description="Low complexity" evidence="4">
    <location>
        <begin position="263"/>
        <end position="291"/>
    </location>
</feature>
<feature type="compositionally biased region" description="Low complexity" evidence="4">
    <location>
        <begin position="317"/>
        <end position="333"/>
    </location>
</feature>
<evidence type="ECO:0000250" key="1"/>
<evidence type="ECO:0000255" key="2"/>
<evidence type="ECO:0000255" key="3">
    <source>
        <dbReference type="PROSITE-ProRule" id="PRU00089"/>
    </source>
</evidence>
<evidence type="ECO:0000256" key="4">
    <source>
        <dbReference type="SAM" id="MobiDB-lite"/>
    </source>
</evidence>
<evidence type="ECO:0000305" key="5"/>
<evidence type="ECO:0000312" key="6">
    <source>
        <dbReference type="EMBL" id="AAH88590.1"/>
    </source>
</evidence>
<evidence type="ECO:0000312" key="7">
    <source>
        <dbReference type="EMBL" id="AAP82293.1"/>
    </source>
</evidence>
<evidence type="ECO:0000312" key="8">
    <source>
        <dbReference type="EMBL" id="CAJ82886.1"/>
    </source>
</evidence>